<feature type="chain" id="PRO_0000114559" description="Alanine racemase, biosynthetic">
    <location>
        <begin position="1"/>
        <end position="359"/>
    </location>
</feature>
<feature type="active site" description="Proton acceptor; specific for D-alanine" evidence="1">
    <location>
        <position position="34"/>
    </location>
</feature>
<feature type="active site" description="Proton acceptor; specific for L-alanine" evidence="1">
    <location>
        <position position="255"/>
    </location>
</feature>
<feature type="binding site" evidence="1">
    <location>
        <position position="129"/>
    </location>
    <ligand>
        <name>substrate</name>
    </ligand>
</feature>
<feature type="binding site" evidence="1">
    <location>
        <position position="303"/>
    </location>
    <ligand>
        <name>substrate</name>
    </ligand>
</feature>
<feature type="modified residue" description="N6-(pyridoxal phosphate)lysine">
    <location>
        <position position="34"/>
    </location>
</feature>
<feature type="sequence conflict" description="In Ref. 3; AA sequence." evidence="3" ref="3">
    <original>T</original>
    <variation>S</variation>
    <location>
        <position position="5"/>
    </location>
</feature>
<proteinExistence type="evidence at protein level"/>
<gene>
    <name type="primary">alr</name>
    <name type="ordered locus">STM4247</name>
</gene>
<dbReference type="EC" id="5.1.1.1"/>
<dbReference type="EMBL" id="M12847">
    <property type="protein sequence ID" value="AAA27022.1"/>
    <property type="molecule type" value="Genomic_DNA"/>
</dbReference>
<dbReference type="EMBL" id="AE006468">
    <property type="protein sequence ID" value="AAL23071.1"/>
    <property type="molecule type" value="Genomic_DNA"/>
</dbReference>
<dbReference type="PIR" id="A24102">
    <property type="entry name" value="A24102"/>
</dbReference>
<dbReference type="RefSeq" id="NP_463112.1">
    <property type="nucleotide sequence ID" value="NC_003197.2"/>
</dbReference>
<dbReference type="RefSeq" id="WP_001147297.1">
    <property type="nucleotide sequence ID" value="NC_003197.2"/>
</dbReference>
<dbReference type="SMR" id="P0A1A3"/>
<dbReference type="STRING" id="99287.STM4247"/>
<dbReference type="PaxDb" id="99287-STM4247"/>
<dbReference type="GeneID" id="1255773"/>
<dbReference type="KEGG" id="stm:STM4247"/>
<dbReference type="PATRIC" id="fig|99287.12.peg.4467"/>
<dbReference type="HOGENOM" id="CLU_028393_1_0_6"/>
<dbReference type="OMA" id="WEILCGF"/>
<dbReference type="PhylomeDB" id="P0A1A3"/>
<dbReference type="BioCyc" id="SENT99287:STM4247-MONOMER"/>
<dbReference type="UniPathway" id="UPA00042">
    <property type="reaction ID" value="UER00497"/>
</dbReference>
<dbReference type="UniPathway" id="UPA00219"/>
<dbReference type="Proteomes" id="UP000001014">
    <property type="component" value="Chromosome"/>
</dbReference>
<dbReference type="GO" id="GO:0005829">
    <property type="term" value="C:cytosol"/>
    <property type="evidence" value="ECO:0000318"/>
    <property type="project" value="GO_Central"/>
</dbReference>
<dbReference type="GO" id="GO:0008784">
    <property type="term" value="F:alanine racemase activity"/>
    <property type="evidence" value="ECO:0000318"/>
    <property type="project" value="GO_Central"/>
</dbReference>
<dbReference type="GO" id="GO:0030170">
    <property type="term" value="F:pyridoxal phosphate binding"/>
    <property type="evidence" value="ECO:0000318"/>
    <property type="project" value="GO_Central"/>
</dbReference>
<dbReference type="GO" id="GO:0071555">
    <property type="term" value="P:cell wall organization"/>
    <property type="evidence" value="ECO:0007669"/>
    <property type="project" value="UniProtKB-KW"/>
</dbReference>
<dbReference type="GO" id="GO:0030632">
    <property type="term" value="P:D-alanine biosynthetic process"/>
    <property type="evidence" value="ECO:0000318"/>
    <property type="project" value="GO_Central"/>
</dbReference>
<dbReference type="GO" id="GO:0009252">
    <property type="term" value="P:peptidoglycan biosynthetic process"/>
    <property type="evidence" value="ECO:0007669"/>
    <property type="project" value="UniProtKB-UniPathway"/>
</dbReference>
<dbReference type="GO" id="GO:0008360">
    <property type="term" value="P:regulation of cell shape"/>
    <property type="evidence" value="ECO:0007669"/>
    <property type="project" value="UniProtKB-KW"/>
</dbReference>
<dbReference type="CDD" id="cd06827">
    <property type="entry name" value="PLPDE_III_AR_proteobact"/>
    <property type="match status" value="1"/>
</dbReference>
<dbReference type="FunFam" id="2.40.37.10:FF:000002">
    <property type="entry name" value="Alanine racemase"/>
    <property type="match status" value="1"/>
</dbReference>
<dbReference type="FunFam" id="3.20.20.10:FF:000002">
    <property type="entry name" value="Alanine racemase"/>
    <property type="match status" value="1"/>
</dbReference>
<dbReference type="Gene3D" id="3.20.20.10">
    <property type="entry name" value="Alanine racemase"/>
    <property type="match status" value="1"/>
</dbReference>
<dbReference type="Gene3D" id="2.40.37.10">
    <property type="entry name" value="Lyase, Ornithine Decarboxylase, Chain A, domain 1"/>
    <property type="match status" value="1"/>
</dbReference>
<dbReference type="HAMAP" id="MF_01201">
    <property type="entry name" value="Ala_racemase"/>
    <property type="match status" value="1"/>
</dbReference>
<dbReference type="InterPro" id="IPR000821">
    <property type="entry name" value="Ala_racemase"/>
</dbReference>
<dbReference type="InterPro" id="IPR009006">
    <property type="entry name" value="Ala_racemase/Decarboxylase_C"/>
</dbReference>
<dbReference type="InterPro" id="IPR011079">
    <property type="entry name" value="Ala_racemase_C"/>
</dbReference>
<dbReference type="InterPro" id="IPR001608">
    <property type="entry name" value="Ala_racemase_N"/>
</dbReference>
<dbReference type="InterPro" id="IPR020622">
    <property type="entry name" value="Ala_racemase_pyridoxalP-BS"/>
</dbReference>
<dbReference type="InterPro" id="IPR029066">
    <property type="entry name" value="PLP-binding_barrel"/>
</dbReference>
<dbReference type="NCBIfam" id="TIGR00492">
    <property type="entry name" value="alr"/>
    <property type="match status" value="1"/>
</dbReference>
<dbReference type="PANTHER" id="PTHR30511">
    <property type="entry name" value="ALANINE RACEMASE"/>
    <property type="match status" value="1"/>
</dbReference>
<dbReference type="PANTHER" id="PTHR30511:SF4">
    <property type="entry name" value="ALANINE RACEMASE, BIOSYNTHETIC"/>
    <property type="match status" value="1"/>
</dbReference>
<dbReference type="Pfam" id="PF00842">
    <property type="entry name" value="Ala_racemase_C"/>
    <property type="match status" value="1"/>
</dbReference>
<dbReference type="Pfam" id="PF01168">
    <property type="entry name" value="Ala_racemase_N"/>
    <property type="match status" value="1"/>
</dbReference>
<dbReference type="PRINTS" id="PR00992">
    <property type="entry name" value="ALARACEMASE"/>
</dbReference>
<dbReference type="SMART" id="SM01005">
    <property type="entry name" value="Ala_racemase_C"/>
    <property type="match status" value="1"/>
</dbReference>
<dbReference type="SUPFAM" id="SSF50621">
    <property type="entry name" value="Alanine racemase C-terminal domain-like"/>
    <property type="match status" value="1"/>
</dbReference>
<dbReference type="SUPFAM" id="SSF51419">
    <property type="entry name" value="PLP-binding barrel"/>
    <property type="match status" value="1"/>
</dbReference>
<dbReference type="PROSITE" id="PS00395">
    <property type="entry name" value="ALANINE_RACEMASE"/>
    <property type="match status" value="1"/>
</dbReference>
<organism>
    <name type="scientific">Salmonella typhimurium (strain LT2 / SGSC1412 / ATCC 700720)</name>
    <dbReference type="NCBI Taxonomy" id="99287"/>
    <lineage>
        <taxon>Bacteria</taxon>
        <taxon>Pseudomonadati</taxon>
        <taxon>Pseudomonadota</taxon>
        <taxon>Gammaproteobacteria</taxon>
        <taxon>Enterobacterales</taxon>
        <taxon>Enterobacteriaceae</taxon>
        <taxon>Salmonella</taxon>
    </lineage>
</organism>
<reference key="1">
    <citation type="journal article" date="1986" name="Biochemistry">
        <title>Biosynthetic alr alanine racemase from Salmonella typhimurium: DNA and protein sequence determination.</title>
        <authorList>
            <person name="Galakatos N.G."/>
            <person name="Daub E."/>
            <person name="Botstein D."/>
            <person name="Walsh C.T."/>
        </authorList>
    </citation>
    <scope>NUCLEOTIDE SEQUENCE [GENOMIC DNA]</scope>
</reference>
<reference key="2">
    <citation type="journal article" date="2001" name="Nature">
        <title>Complete genome sequence of Salmonella enterica serovar Typhimurium LT2.</title>
        <authorList>
            <person name="McClelland M."/>
            <person name="Sanderson K.E."/>
            <person name="Spieth J."/>
            <person name="Clifton S.W."/>
            <person name="Latreille P."/>
            <person name="Courtney L."/>
            <person name="Porwollik S."/>
            <person name="Ali J."/>
            <person name="Dante M."/>
            <person name="Du F."/>
            <person name="Hou S."/>
            <person name="Layman D."/>
            <person name="Leonard S."/>
            <person name="Nguyen C."/>
            <person name="Scott K."/>
            <person name="Holmes A."/>
            <person name="Grewal N."/>
            <person name="Mulvaney E."/>
            <person name="Ryan E."/>
            <person name="Sun H."/>
            <person name="Florea L."/>
            <person name="Miller W."/>
            <person name="Stoneking T."/>
            <person name="Nhan M."/>
            <person name="Waterston R."/>
            <person name="Wilson R.K."/>
        </authorList>
    </citation>
    <scope>NUCLEOTIDE SEQUENCE [LARGE SCALE GENOMIC DNA]</scope>
    <source>
        <strain>LT2 / SGSC1412 / ATCC 700720</strain>
    </source>
</reference>
<reference key="3">
    <citation type="journal article" date="1986" name="Biochemistry">
        <title>Biosynthetic alanine racemase of Salmonella typhimurium: purification and characterization of the enzyme encoded by the alr gene.</title>
        <authorList>
            <person name="Esaki N."/>
            <person name="Walsh C.T."/>
        </authorList>
    </citation>
    <scope>PROTEIN SEQUENCE OF 1-9 AND 29-46</scope>
    <scope>FUNCTION</scope>
    <scope>CATALYTIC ACTIVITY</scope>
    <scope>COFACTOR</scope>
    <scope>BIOPHYSICOCHEMICAL PROPERTIES</scope>
    <scope>PATHWAY</scope>
    <scope>SUBUNIT</scope>
</reference>
<name>ALR1_SALTY</name>
<evidence type="ECO:0000250" key="1"/>
<evidence type="ECO:0000269" key="2">
    <source>
    </source>
</evidence>
<evidence type="ECO:0000305" key="3"/>
<accession>P0A1A3</accession>
<accession>P06655</accession>
<keyword id="KW-0133">Cell shape</keyword>
<keyword id="KW-0961">Cell wall biogenesis/degradation</keyword>
<keyword id="KW-0903">Direct protein sequencing</keyword>
<keyword id="KW-0413">Isomerase</keyword>
<keyword id="KW-0573">Peptidoglycan synthesis</keyword>
<keyword id="KW-0663">Pyridoxal phosphate</keyword>
<keyword id="KW-1185">Reference proteome</keyword>
<protein>
    <recommendedName>
        <fullName>Alanine racemase, biosynthetic</fullName>
        <ecNumber>5.1.1.1</ecNumber>
    </recommendedName>
</protein>
<sequence length="359" mass="39076">MQAATVVINRRALRHNLQRLRELAPASKLVAVVKANAYGHGLLETARTLPDADAFGVARLEEALRLRAGGITQPILLLEGFFDAADLPTISAQCLHTAVHNQEQLAALEAVELAEPVTVWMKLDTGMHRLGVRPEEAEAFYQRLTHCKNVRQPVNIVSHFARADEPECGATEHQLDIFNAFCQGKPGQRSIAASGGILLWPQSHFDWARPGIILYGVSPLEHKPWGPDFGFQPVMSLTSSLIAVRDHKAGEPVGYGGTWVSERDTRLGVVAMGYGDGYPRAAPSGTPVLVNGREVPIVGRVAMDMICVDLGPNAQDNAGDPVVLWGEGLPVERIAEMTKVSAYELITRLTSRVAMKYID</sequence>
<comment type="function">
    <text evidence="2">Catalyzes the interconversion of L-alanine and D-alanine. Provides the D-alanine required for cell wall biosynthesis.</text>
</comment>
<comment type="catalytic activity">
    <reaction evidence="2">
        <text>L-alanine = D-alanine</text>
        <dbReference type="Rhea" id="RHEA:20249"/>
        <dbReference type="ChEBI" id="CHEBI:57416"/>
        <dbReference type="ChEBI" id="CHEBI:57972"/>
        <dbReference type="EC" id="5.1.1.1"/>
    </reaction>
</comment>
<comment type="cofactor">
    <cofactor evidence="2">
        <name>pyridoxal 5'-phosphate</name>
        <dbReference type="ChEBI" id="CHEBI:597326"/>
    </cofactor>
</comment>
<comment type="biophysicochemical properties">
    <phDependence>
        <text evidence="2">Optimum pH is 8.5.</text>
    </phDependence>
</comment>
<comment type="pathway">
    <text evidence="2">Amino-acid biosynthesis; D-alanine biosynthesis; D-alanine from L-alanine: step 1/1.</text>
</comment>
<comment type="pathway">
    <text evidence="2">Cell wall biogenesis; peptidoglycan biosynthesis.</text>
</comment>
<comment type="subunit">
    <text evidence="2">Monomer.</text>
</comment>
<comment type="similarity">
    <text evidence="3">Belongs to the alanine racemase family.</text>
</comment>